<evidence type="ECO:0000255" key="1">
    <source>
        <dbReference type="HAMAP-Rule" id="MF_00336"/>
    </source>
</evidence>
<dbReference type="EC" id="6.3.3.3" evidence="1"/>
<dbReference type="EMBL" id="CU458896">
    <property type="protein sequence ID" value="CAM62766.1"/>
    <property type="molecule type" value="Genomic_DNA"/>
</dbReference>
<dbReference type="RefSeq" id="WP_005111240.1">
    <property type="nucleotide sequence ID" value="NZ_MLCG01000003.1"/>
</dbReference>
<dbReference type="SMR" id="B1MBZ5"/>
<dbReference type="GeneID" id="93379617"/>
<dbReference type="KEGG" id="mab:MAB_2686c"/>
<dbReference type="UniPathway" id="UPA00078">
    <property type="reaction ID" value="UER00161"/>
</dbReference>
<dbReference type="Proteomes" id="UP000007137">
    <property type="component" value="Chromosome"/>
</dbReference>
<dbReference type="GO" id="GO:0005829">
    <property type="term" value="C:cytosol"/>
    <property type="evidence" value="ECO:0007669"/>
    <property type="project" value="TreeGrafter"/>
</dbReference>
<dbReference type="GO" id="GO:0005524">
    <property type="term" value="F:ATP binding"/>
    <property type="evidence" value="ECO:0007669"/>
    <property type="project" value="UniProtKB-UniRule"/>
</dbReference>
<dbReference type="GO" id="GO:0004141">
    <property type="term" value="F:dethiobiotin synthase activity"/>
    <property type="evidence" value="ECO:0007669"/>
    <property type="project" value="UniProtKB-UniRule"/>
</dbReference>
<dbReference type="GO" id="GO:0000287">
    <property type="term" value="F:magnesium ion binding"/>
    <property type="evidence" value="ECO:0007669"/>
    <property type="project" value="UniProtKB-UniRule"/>
</dbReference>
<dbReference type="GO" id="GO:0009102">
    <property type="term" value="P:biotin biosynthetic process"/>
    <property type="evidence" value="ECO:0007669"/>
    <property type="project" value="UniProtKB-UniRule"/>
</dbReference>
<dbReference type="CDD" id="cd03109">
    <property type="entry name" value="DTBS"/>
    <property type="match status" value="1"/>
</dbReference>
<dbReference type="Gene3D" id="3.40.50.300">
    <property type="entry name" value="P-loop containing nucleotide triphosphate hydrolases"/>
    <property type="match status" value="1"/>
</dbReference>
<dbReference type="HAMAP" id="MF_00336">
    <property type="entry name" value="BioD"/>
    <property type="match status" value="1"/>
</dbReference>
<dbReference type="InterPro" id="IPR004472">
    <property type="entry name" value="DTB_synth_BioD"/>
</dbReference>
<dbReference type="InterPro" id="IPR027417">
    <property type="entry name" value="P-loop_NTPase"/>
</dbReference>
<dbReference type="NCBIfam" id="TIGR00347">
    <property type="entry name" value="bioD"/>
    <property type="match status" value="1"/>
</dbReference>
<dbReference type="PANTHER" id="PTHR43210">
    <property type="entry name" value="DETHIOBIOTIN SYNTHETASE"/>
    <property type="match status" value="1"/>
</dbReference>
<dbReference type="PANTHER" id="PTHR43210:SF5">
    <property type="entry name" value="DETHIOBIOTIN SYNTHETASE"/>
    <property type="match status" value="1"/>
</dbReference>
<dbReference type="Pfam" id="PF13500">
    <property type="entry name" value="AAA_26"/>
    <property type="match status" value="1"/>
</dbReference>
<dbReference type="PIRSF" id="PIRSF006755">
    <property type="entry name" value="DTB_synth"/>
    <property type="match status" value="1"/>
</dbReference>
<dbReference type="SUPFAM" id="SSF52540">
    <property type="entry name" value="P-loop containing nucleoside triphosphate hydrolases"/>
    <property type="match status" value="1"/>
</dbReference>
<reference key="1">
    <citation type="journal article" date="2009" name="PLoS ONE">
        <title>Non mycobacterial virulence genes in the genome of the emerging pathogen Mycobacterium abscessus.</title>
        <authorList>
            <person name="Ripoll F."/>
            <person name="Pasek S."/>
            <person name="Schenowitz C."/>
            <person name="Dossat C."/>
            <person name="Barbe V."/>
            <person name="Rottman M."/>
            <person name="Macheras E."/>
            <person name="Heym B."/>
            <person name="Herrmann J.L."/>
            <person name="Daffe M."/>
            <person name="Brosch R."/>
            <person name="Risler J.L."/>
            <person name="Gaillard J.L."/>
        </authorList>
    </citation>
    <scope>NUCLEOTIDE SEQUENCE [LARGE SCALE GENOMIC DNA]</scope>
    <source>
        <strain>ATCC 19977 / DSM 44196 / CCUG 20993 / CIP 104536 / JCM 13569 / NCTC 13031 / TMC 1543 / L948</strain>
    </source>
</reference>
<keyword id="KW-0067">ATP-binding</keyword>
<keyword id="KW-0093">Biotin biosynthesis</keyword>
<keyword id="KW-0963">Cytoplasm</keyword>
<keyword id="KW-0436">Ligase</keyword>
<keyword id="KW-0460">Magnesium</keyword>
<keyword id="KW-0479">Metal-binding</keyword>
<keyword id="KW-0547">Nucleotide-binding</keyword>
<keyword id="KW-1185">Reference proteome</keyword>
<comment type="function">
    <text evidence="1">Catalyzes a mechanistically unusual reaction, the ATP-dependent insertion of CO2 between the N7 and N8 nitrogen atoms of 7,8-diaminopelargonic acid (DAPA, also called 7,8-diammoniononanoate) to form a ureido ring.</text>
</comment>
<comment type="catalytic activity">
    <reaction evidence="1">
        <text>(7R,8S)-7,8-diammoniononanoate + CO2 + ATP = (4R,5S)-dethiobiotin + ADP + phosphate + 3 H(+)</text>
        <dbReference type="Rhea" id="RHEA:15805"/>
        <dbReference type="ChEBI" id="CHEBI:15378"/>
        <dbReference type="ChEBI" id="CHEBI:16526"/>
        <dbReference type="ChEBI" id="CHEBI:30616"/>
        <dbReference type="ChEBI" id="CHEBI:43474"/>
        <dbReference type="ChEBI" id="CHEBI:149469"/>
        <dbReference type="ChEBI" id="CHEBI:149473"/>
        <dbReference type="ChEBI" id="CHEBI:456216"/>
        <dbReference type="EC" id="6.3.3.3"/>
    </reaction>
</comment>
<comment type="cofactor">
    <cofactor evidence="1">
        <name>Mg(2+)</name>
        <dbReference type="ChEBI" id="CHEBI:18420"/>
    </cofactor>
</comment>
<comment type="pathway">
    <text evidence="1">Cofactor biosynthesis; biotin biosynthesis; biotin from 7,8-diaminononanoate: step 1/2.</text>
</comment>
<comment type="subunit">
    <text evidence="1">Homodimer.</text>
</comment>
<comment type="subcellular location">
    <subcellularLocation>
        <location evidence="1">Cytoplasm</location>
    </subcellularLocation>
</comment>
<comment type="similarity">
    <text evidence="1">Belongs to the dethiobiotin synthetase family.</text>
</comment>
<organism>
    <name type="scientific">Mycobacteroides abscessus (strain ATCC 19977 / DSM 44196 / CCUG 20993 / CIP 104536 / JCM 13569 / NCTC 13031 / TMC 1543 / L948)</name>
    <name type="common">Mycobacterium abscessus</name>
    <dbReference type="NCBI Taxonomy" id="561007"/>
    <lineage>
        <taxon>Bacteria</taxon>
        <taxon>Bacillati</taxon>
        <taxon>Actinomycetota</taxon>
        <taxon>Actinomycetes</taxon>
        <taxon>Mycobacteriales</taxon>
        <taxon>Mycobacteriaceae</taxon>
        <taxon>Mycobacteroides</taxon>
        <taxon>Mycobacteroides abscessus</taxon>
    </lineage>
</organism>
<feature type="chain" id="PRO_1000119876" description="ATP-dependent dethiobiotin synthetase BioD">
    <location>
        <begin position="1"/>
        <end position="225"/>
    </location>
</feature>
<feature type="active site" evidence="1">
    <location>
        <position position="37"/>
    </location>
</feature>
<feature type="binding site" evidence="1">
    <location>
        <begin position="12"/>
        <end position="17"/>
    </location>
    <ligand>
        <name>ATP</name>
        <dbReference type="ChEBI" id="CHEBI:30616"/>
    </ligand>
</feature>
<feature type="binding site" evidence="1">
    <location>
        <position position="16"/>
    </location>
    <ligand>
        <name>Mg(2+)</name>
        <dbReference type="ChEBI" id="CHEBI:18420"/>
    </ligand>
</feature>
<feature type="binding site" evidence="1">
    <location>
        <position position="41"/>
    </location>
    <ligand>
        <name>substrate</name>
    </ligand>
</feature>
<feature type="binding site" evidence="1">
    <location>
        <position position="46"/>
    </location>
    <ligand>
        <name>ATP</name>
        <dbReference type="ChEBI" id="CHEBI:30616"/>
    </ligand>
</feature>
<feature type="binding site" evidence="1">
    <location>
        <position position="46"/>
    </location>
    <ligand>
        <name>Mg(2+)</name>
        <dbReference type="ChEBI" id="CHEBI:18420"/>
    </ligand>
</feature>
<feature type="binding site" evidence="1">
    <location>
        <begin position="105"/>
        <end position="108"/>
    </location>
    <ligand>
        <name>ATP</name>
        <dbReference type="ChEBI" id="CHEBI:30616"/>
    </ligand>
</feature>
<feature type="binding site" evidence="1">
    <location>
        <position position="105"/>
    </location>
    <ligand>
        <name>Mg(2+)</name>
        <dbReference type="ChEBI" id="CHEBI:18420"/>
    </ligand>
</feature>
<feature type="binding site" evidence="1">
    <location>
        <begin position="166"/>
        <end position="167"/>
    </location>
    <ligand>
        <name>ATP</name>
        <dbReference type="ChEBI" id="CHEBI:30616"/>
    </ligand>
</feature>
<feature type="binding site" evidence="1">
    <location>
        <begin position="196"/>
        <end position="198"/>
    </location>
    <ligand>
        <name>ATP</name>
        <dbReference type="ChEBI" id="CHEBI:30616"/>
    </ligand>
</feature>
<accession>B1MBZ5</accession>
<gene>
    <name evidence="1" type="primary">bioD</name>
    <name type="ordered locus">MAB_2686c</name>
</gene>
<proteinExistence type="inferred from homology"/>
<sequence>MTILLVTGTSTGVGKTVATAALAAAAVRQGIDVTVCKPVQTGDDHDAGEVARLSGVTRVQTLVRYPEPLAPVASASRAGLELLDHTQMATAIVALDRPGALTLVEGAGGLLVELAADGKTLRDLAMVLDAPVLVVTTADLGTLNHTALTLEALAVQSVPCAGLVVGSFPAEPDLAQRLNRENLANQFGTPVRAVIPEGAARLMPPVFAELSIELFEPQWVAGLVA</sequence>
<name>BIOD_MYCA9</name>
<protein>
    <recommendedName>
        <fullName evidence="1">ATP-dependent dethiobiotin synthetase BioD</fullName>
        <ecNumber evidence="1">6.3.3.3</ecNumber>
    </recommendedName>
    <alternativeName>
        <fullName evidence="1">DTB synthetase</fullName>
        <shortName evidence="1">DTBS</shortName>
    </alternativeName>
    <alternativeName>
        <fullName evidence="1">Dethiobiotin synthase</fullName>
    </alternativeName>
</protein>